<reference key="1">
    <citation type="journal article" date="2000" name="Biochem. Biophys. Res. Commun.">
        <title>A calmodulin binding protein from Arabidopsis is induced by ethylene and contains a DNA-binding motif.</title>
        <authorList>
            <person name="Reddy A.S.N."/>
            <person name="Reddy V.S."/>
            <person name="Golovkin M."/>
        </authorList>
    </citation>
    <scope>NUCLEOTIDE SEQUENCE [MRNA]</scope>
    <scope>TISSUE SPECIFICITY</scope>
    <scope>INDUCTION</scope>
</reference>
<reference key="2">
    <citation type="journal article" date="2002" name="J. Biol. Chem.">
        <title>A calmodulin-binding/CGCG box DNA-binding protein family involved in multiple signaling pathways in plants.</title>
        <authorList>
            <person name="Yang T."/>
            <person name="Poovaiah B.W."/>
        </authorList>
    </citation>
    <scope>NUCLEOTIDE SEQUENCE [MRNA]</scope>
    <scope>FUNCTION</scope>
    <scope>CALMODULIN-BINDING</scope>
    <scope>INDUCTION</scope>
    <scope>TISSUE SPECIFICITY</scope>
    <scope>SUBCELLULAR LOCATION</scope>
</reference>
<reference key="3">
    <citation type="journal article" date="1999" name="Nature">
        <title>Sequence and analysis of chromosome 2 of the plant Arabidopsis thaliana.</title>
        <authorList>
            <person name="Lin X."/>
            <person name="Kaul S."/>
            <person name="Rounsley S.D."/>
            <person name="Shea T.P."/>
            <person name="Benito M.-I."/>
            <person name="Town C.D."/>
            <person name="Fujii C.Y."/>
            <person name="Mason T.M."/>
            <person name="Bowman C.L."/>
            <person name="Barnstead M.E."/>
            <person name="Feldblyum T.V."/>
            <person name="Buell C.R."/>
            <person name="Ketchum K.A."/>
            <person name="Lee J.J."/>
            <person name="Ronning C.M."/>
            <person name="Koo H.L."/>
            <person name="Moffat K.S."/>
            <person name="Cronin L.A."/>
            <person name="Shen M."/>
            <person name="Pai G."/>
            <person name="Van Aken S."/>
            <person name="Umayam L."/>
            <person name="Tallon L.J."/>
            <person name="Gill J.E."/>
            <person name="Adams M.D."/>
            <person name="Carrera A.J."/>
            <person name="Creasy T.H."/>
            <person name="Goodman H.M."/>
            <person name="Somerville C.R."/>
            <person name="Copenhaver G.P."/>
            <person name="Preuss D."/>
            <person name="Nierman W.C."/>
            <person name="White O."/>
            <person name="Eisen J.A."/>
            <person name="Salzberg S.L."/>
            <person name="Fraser C.M."/>
            <person name="Venter J.C."/>
        </authorList>
    </citation>
    <scope>NUCLEOTIDE SEQUENCE [LARGE SCALE GENOMIC DNA]</scope>
    <source>
        <strain>cv. Columbia</strain>
    </source>
</reference>
<reference key="4">
    <citation type="journal article" date="2017" name="Plant J.">
        <title>Araport11: a complete reannotation of the Arabidopsis thaliana reference genome.</title>
        <authorList>
            <person name="Cheng C.Y."/>
            <person name="Krishnakumar V."/>
            <person name="Chan A.P."/>
            <person name="Thibaud-Nissen F."/>
            <person name="Schobel S."/>
            <person name="Town C.D."/>
        </authorList>
    </citation>
    <scope>GENOME REANNOTATION</scope>
    <source>
        <strain>cv. Columbia</strain>
    </source>
</reference>
<reference key="5">
    <citation type="journal article" date="2003" name="Science">
        <title>Empirical analysis of transcriptional activity in the Arabidopsis genome.</title>
        <authorList>
            <person name="Yamada K."/>
            <person name="Lim J."/>
            <person name="Dale J.M."/>
            <person name="Chen H."/>
            <person name="Shinn P."/>
            <person name="Palm C.J."/>
            <person name="Southwick A.M."/>
            <person name="Wu H.C."/>
            <person name="Kim C.J."/>
            <person name="Nguyen M."/>
            <person name="Pham P.K."/>
            <person name="Cheuk R.F."/>
            <person name="Karlin-Newmann G."/>
            <person name="Liu S.X."/>
            <person name="Lam B."/>
            <person name="Sakano H."/>
            <person name="Wu T."/>
            <person name="Yu G."/>
            <person name="Miranda M."/>
            <person name="Quach H.L."/>
            <person name="Tripp M."/>
            <person name="Chang C.H."/>
            <person name="Lee J.M."/>
            <person name="Toriumi M.J."/>
            <person name="Chan M.M."/>
            <person name="Tang C.C."/>
            <person name="Onodera C.S."/>
            <person name="Deng J.M."/>
            <person name="Akiyama K."/>
            <person name="Ansari Y."/>
            <person name="Arakawa T."/>
            <person name="Banh J."/>
            <person name="Banno F."/>
            <person name="Bowser L."/>
            <person name="Brooks S.Y."/>
            <person name="Carninci P."/>
            <person name="Chao Q."/>
            <person name="Choy N."/>
            <person name="Enju A."/>
            <person name="Goldsmith A.D."/>
            <person name="Gurjal M."/>
            <person name="Hansen N.F."/>
            <person name="Hayashizaki Y."/>
            <person name="Johnson-Hopson C."/>
            <person name="Hsuan V.W."/>
            <person name="Iida K."/>
            <person name="Karnes M."/>
            <person name="Khan S."/>
            <person name="Koesema E."/>
            <person name="Ishida J."/>
            <person name="Jiang P.X."/>
            <person name="Jones T."/>
            <person name="Kawai J."/>
            <person name="Kamiya A."/>
            <person name="Meyers C."/>
            <person name="Nakajima M."/>
            <person name="Narusaka M."/>
            <person name="Seki M."/>
            <person name="Sakurai T."/>
            <person name="Satou M."/>
            <person name="Tamse R."/>
            <person name="Vaysberg M."/>
            <person name="Wallender E.K."/>
            <person name="Wong C."/>
            <person name="Yamamura Y."/>
            <person name="Yuan S."/>
            <person name="Shinozaki K."/>
            <person name="Davis R.W."/>
            <person name="Theologis A."/>
            <person name="Ecker J.R."/>
        </authorList>
    </citation>
    <scope>NUCLEOTIDE SEQUENCE [LARGE SCALE MRNA]</scope>
    <source>
        <strain>cv. Columbia</strain>
    </source>
</reference>
<reference key="6">
    <citation type="submission" date="2006-07" db="EMBL/GenBank/DDBJ databases">
        <title>Large-scale analysis of RIKEN Arabidopsis full-length (RAFL) cDNAs.</title>
        <authorList>
            <person name="Totoki Y."/>
            <person name="Seki M."/>
            <person name="Ishida J."/>
            <person name="Nakajima M."/>
            <person name="Enju A."/>
            <person name="Kamiya A."/>
            <person name="Narusaka M."/>
            <person name="Shin-i T."/>
            <person name="Nakagawa M."/>
            <person name="Sakamoto N."/>
            <person name="Oishi K."/>
            <person name="Kohara Y."/>
            <person name="Kobayashi M."/>
            <person name="Toyoda A."/>
            <person name="Sakaki Y."/>
            <person name="Sakurai T."/>
            <person name="Iida K."/>
            <person name="Akiyama K."/>
            <person name="Satou M."/>
            <person name="Toyoda T."/>
            <person name="Konagaya A."/>
            <person name="Carninci P."/>
            <person name="Kawai J."/>
            <person name="Hayashizaki Y."/>
            <person name="Shinozaki K."/>
        </authorList>
    </citation>
    <scope>NUCLEOTIDE SEQUENCE [LARGE SCALE MRNA]</scope>
    <source>
        <strain>cv. Columbia</strain>
    </source>
</reference>
<reference key="7">
    <citation type="journal article" date="2002" name="J. Biol. Chem.">
        <title>A novel family of calmodulin-binding transcription activators in multicellular organisms.</title>
        <authorList>
            <person name="Bouche N."/>
            <person name="Scharlat A."/>
            <person name="Snedden W."/>
            <person name="Bouchez D."/>
            <person name="Fromm H."/>
        </authorList>
    </citation>
    <scope>FUNCTION</scope>
    <scope>GENE FAMILY</scope>
    <scope>NOMENCLATURE</scope>
</reference>
<reference key="8">
    <citation type="journal article" date="2003" name="Plant Cell Physiol.">
        <title>Arabidopsis CAMTA family proteins enhance V-PPase expression in pollen.</title>
        <authorList>
            <person name="Mitsuda N."/>
            <person name="Isono T."/>
            <person name="Sato M.H."/>
        </authorList>
    </citation>
    <scope>TISSUE SPECIFICITY</scope>
</reference>
<reference key="9">
    <citation type="journal article" date="2002" name="J. Biol. Chem.">
        <title>Genes encoding calmodulin-binding proteins in the Arabidopsis genome.</title>
        <authorList>
            <person name="Reddy V.S."/>
            <person name="Ali G.S."/>
            <person name="Reddy A.S.N."/>
        </authorList>
    </citation>
    <scope>IDENTIFICATION</scope>
</reference>
<reference key="10">
    <citation type="journal article" date="2008" name="FEBS Lett.">
        <title>Calmodulin-binding transcription activator (CAMTA) 3 mediates biotic defense responses in Arabidopsis.</title>
        <authorList>
            <person name="Galon Y."/>
            <person name="Nave R."/>
            <person name="Boyce J.M."/>
            <person name="Nachmias D."/>
            <person name="Knight M.R."/>
            <person name="Fromm H."/>
        </authorList>
    </citation>
    <scope>FUNCTION</scope>
    <scope>DISRUPTION PHENOTYPE</scope>
</reference>
<reference key="11">
    <citation type="journal article" date="2009" name="J. Proteomics">
        <title>Phosphoproteomic analysis of nuclei-enriched fractions from Arabidopsis thaliana.</title>
        <authorList>
            <person name="Jones A.M.E."/>
            <person name="MacLean D."/>
            <person name="Studholme D.J."/>
            <person name="Serna-Sanz A."/>
            <person name="Andreasson E."/>
            <person name="Rathjen J.P."/>
            <person name="Peck S.C."/>
        </authorList>
    </citation>
    <scope>SUBCELLULAR LOCATION</scope>
    <scope>PHOSPHORYLATION [LARGE SCALE ANALYSIS] AT SER-272</scope>
    <scope>IDENTIFICATION BY MASS SPECTROMETRY [LARGE SCALE ANALYSIS]</scope>
    <source>
        <strain>cv. Columbia</strain>
    </source>
</reference>
<reference key="12">
    <citation type="journal article" date="2009" name="Nature">
        <title>Ca(2+)/calmodulin regulates salicylic-acid-mediated plant immunity.</title>
        <authorList>
            <person name="Du L."/>
            <person name="Ali G.S."/>
            <person name="Simons K.A."/>
            <person name="Hou J."/>
            <person name="Yang T."/>
            <person name="Reddy A.S."/>
            <person name="Poovaiah B.W."/>
        </authorList>
    </citation>
    <scope>FUNCTION</scope>
    <scope>DISRUPTION PHENOTYPE</scope>
</reference>
<reference key="13">
    <citation type="journal article" date="2009" name="Plant Cell">
        <title>Roles for Arabidopsis CAMTA transcription factors in cold-regulated gene expression and freezing tolerance.</title>
        <authorList>
            <person name="Doherty C.J."/>
            <person name="Van Buskirk H.A."/>
            <person name="Myers S.J."/>
            <person name="Thomashow M.F."/>
        </authorList>
    </citation>
    <scope>FUNCTION</scope>
    <scope>DISRUPTION PHENOTYPE</scope>
</reference>
<reference key="14">
    <citation type="journal article" date="2011" name="Plant Physiol.">
        <title>Brush and spray: a high-throughput systemic acquired resistance assay suitable for large-scale genetic screening.</title>
        <authorList>
            <person name="Jing B."/>
            <person name="Xu S."/>
            <person name="Xu M."/>
            <person name="Li Y."/>
            <person name="Li S."/>
            <person name="Ding J."/>
            <person name="Zhang Y."/>
        </authorList>
    </citation>
    <scope>FUNCTION</scope>
</reference>
<reference key="15">
    <citation type="journal article" date="2012" name="Plant Cell Physiol.">
        <title>The calmodulin-binding transcription factor SIGNAL RESPONSIVE1 is a novel regulator of glucosinolate metabolism and herbivory tolerance in Arabidopsis.</title>
        <authorList>
            <person name="Laluk K."/>
            <person name="Prasad K.V."/>
            <person name="Savchenko T."/>
            <person name="Celesnik H."/>
            <person name="Dehesh K."/>
            <person name="Levy M."/>
            <person name="Mitchell-Olds T."/>
            <person name="Reddy A.S."/>
        </authorList>
    </citation>
    <scope>FUNCTION</scope>
    <scope>DISRUPTION PHENOTYPE</scope>
</reference>
<reference key="16">
    <citation type="journal article" date="2012" name="Plant Mol. Biol.">
        <title>Coupling calcium/calmodulin-mediated signaling and herbivore-induced plant response through calmodulin-binding transcription factor AtSR1/CAMTA3.</title>
        <authorList>
            <person name="Qiu Y."/>
            <person name="Xi J."/>
            <person name="Du L."/>
            <person name="Suttle J.C."/>
            <person name="Poovaiah B.W."/>
        </authorList>
    </citation>
    <scope>FUNCTION</scope>
    <scope>DISRUPTION PHENOTYPE</scope>
</reference>
<reference key="17">
    <citation type="journal article" date="2012" name="Plant Physiol.">
        <title>SR1, a calmodulin-binding transcription factor, modulates plant defense and ethylene-induced senescence by directly regulating NDR1 and EIN3.</title>
        <authorList>
            <person name="Nie H."/>
            <person name="Zhao C."/>
            <person name="Wu G."/>
            <person name="Wu Y."/>
            <person name="Chen Y."/>
            <person name="Tang D."/>
        </authorList>
    </citation>
    <scope>FUNCTION</scope>
    <scope>INDUCTION</scope>
    <scope>MUTAGENESIS OF ALA-855</scope>
</reference>
<reference key="18">
    <citation type="journal article" date="2013" name="Plant J.">
        <title>Roles of CAMTA transcription factors and salicylic acid in configuring the low-temperature transcriptome and freezing tolerance of Arabidopsis.</title>
        <authorList>
            <person name="Kim Y."/>
            <person name="Park S."/>
            <person name="Gilmour S.J."/>
            <person name="Thomashow M.F."/>
        </authorList>
    </citation>
    <scope>FUNCTION</scope>
    <scope>DISRUPTION PHENOTYPE</scope>
</reference>
<reference key="19">
    <citation type="journal article" date="2014" name="Plant J.">
        <title>Regulation of plant immunity through ubiquitin-mediated modulation of Ca(2+) -calmodulin-AtSR1/CAMTA3 signaling.</title>
        <authorList>
            <person name="Zhang L."/>
            <person name="Du L."/>
            <person name="Shen C."/>
            <person name="Yang Y."/>
            <person name="Poovaiah B.W."/>
        </authorList>
    </citation>
    <scope>INTERACTION WITH SR1IP1</scope>
    <scope>UBIQUITINATION</scope>
</reference>
<reference key="20">
    <citation type="journal article" date="2014" name="Plant J.">
        <title>A key general stress response motif is regulated non-uniformly by CAMTA transcription factors.</title>
        <authorList>
            <person name="Benn G."/>
            <person name="Wang C.Q."/>
            <person name="Hicks D.R."/>
            <person name="Stein J."/>
            <person name="Guthrie C."/>
            <person name="Dehesh K."/>
        </authorList>
    </citation>
    <scope>FUNCTION</scope>
</reference>
<reference key="21">
    <citation type="journal article" date="2014" name="Plant Physiol.">
        <title>Distinct roles for mitogen-activated protein kinase signaling and CALMODULIN-BINDING TRANSCRIPTIONAL ACTIVATOR3 in regulating the peak time and amplitude of the plant general stress response.</title>
        <authorList>
            <person name="Bjornson M."/>
            <person name="Benn G."/>
            <person name="Song X."/>
            <person name="Comai L."/>
            <person name="Franz A.K."/>
            <person name="Dandekar A.M."/>
            <person name="Drakakaki G."/>
            <person name="Dehesh K."/>
        </authorList>
    </citation>
    <scope>FUNCTION</scope>
</reference>
<reference key="22">
    <citation type="journal article" date="2017" name="Cell Host Microbe">
        <title>Matching NLR immune receptors to autoimmunity in camta3 mutants using antimorphic NLR alleles.</title>
        <authorList>
            <person name="Lolle S."/>
            <person name="Greeff C."/>
            <person name="Petersen K."/>
            <person name="Roux M."/>
            <person name="Jensen M.K."/>
            <person name="Bressendorff S."/>
            <person name="Rodriguez E."/>
            <person name="Soemark K."/>
            <person name="Mundy J."/>
            <person name="Petersen M."/>
        </authorList>
    </citation>
    <scope>FUNCTION</scope>
    <scope>INTERACTION WITH DSC1</scope>
    <scope>DISRUPTION PHENOTYPE</scope>
</reference>
<reference key="23">
    <citation type="journal article" date="2017" name="Plant Cell">
        <title>Different cold-signaling pathways function in the responses to rapid and gradual decreases in temperature.</title>
        <authorList>
            <person name="Kidokoro S."/>
            <person name="Yoneda K."/>
            <person name="Takasaki H."/>
            <person name="Takahashi F."/>
            <person name="Shinozaki K."/>
            <person name="Yamaguchi-Shinozaki K."/>
        </authorList>
    </citation>
    <scope>FUNCTION</scope>
    <scope>SUBCELLULAR LOCATION</scope>
</reference>
<dbReference type="EMBL" id="AY510025">
    <property type="protein sequence ID" value="AAR98746.1"/>
    <property type="molecule type" value="mRNA"/>
</dbReference>
<dbReference type="EMBL" id="AF303397">
    <property type="protein sequence ID" value="AAG37879.1"/>
    <property type="molecule type" value="mRNA"/>
</dbReference>
<dbReference type="EMBL" id="AF506697">
    <property type="protein sequence ID" value="AAN74651.1"/>
    <property type="molecule type" value="mRNA"/>
</dbReference>
<dbReference type="EMBL" id="AC007168">
    <property type="protein sequence ID" value="AAD23613.1"/>
    <property type="status" value="ALT_SEQ"/>
    <property type="molecule type" value="Genomic_DNA"/>
</dbReference>
<dbReference type="EMBL" id="CP002685">
    <property type="protein sequence ID" value="AEC07289.1"/>
    <property type="molecule type" value="Genomic_DNA"/>
</dbReference>
<dbReference type="EMBL" id="CP002685">
    <property type="protein sequence ID" value="AEC07290.1"/>
    <property type="molecule type" value="Genomic_DNA"/>
</dbReference>
<dbReference type="EMBL" id="BT002459">
    <property type="protein sequence ID" value="AAO00819.1"/>
    <property type="molecule type" value="mRNA"/>
</dbReference>
<dbReference type="EMBL" id="AK226486">
    <property type="protein sequence ID" value="BAE98628.1"/>
    <property type="molecule type" value="mRNA"/>
</dbReference>
<dbReference type="PIR" id="A84611">
    <property type="entry name" value="A84611"/>
</dbReference>
<dbReference type="RefSeq" id="NP_001118361.1">
    <property type="nucleotide sequence ID" value="NM_001124889.2"/>
</dbReference>
<dbReference type="RefSeq" id="NP_850023.1">
    <property type="nucleotide sequence ID" value="NM_179692.3"/>
</dbReference>
<dbReference type="SMR" id="Q8GSA7"/>
<dbReference type="BioGRID" id="2115">
    <property type="interactions" value="2"/>
</dbReference>
<dbReference type="DIP" id="DIP-59735N"/>
<dbReference type="FunCoup" id="Q8GSA7">
    <property type="interactions" value="1668"/>
</dbReference>
<dbReference type="IntAct" id="Q8GSA7">
    <property type="interactions" value="1"/>
</dbReference>
<dbReference type="STRING" id="3702.Q8GSA7"/>
<dbReference type="GlyGen" id="Q8GSA7">
    <property type="glycosylation" value="1 site"/>
</dbReference>
<dbReference type="iPTMnet" id="Q8GSA7"/>
<dbReference type="PaxDb" id="3702-AT2G22300.1"/>
<dbReference type="ProteomicsDB" id="220531"/>
<dbReference type="EnsemblPlants" id="AT2G22300.1">
    <property type="protein sequence ID" value="AT2G22300.1"/>
    <property type="gene ID" value="AT2G22300"/>
</dbReference>
<dbReference type="EnsemblPlants" id="AT2G22300.2">
    <property type="protein sequence ID" value="AT2G22300.2"/>
    <property type="gene ID" value="AT2G22300"/>
</dbReference>
<dbReference type="GeneID" id="816762"/>
<dbReference type="Gramene" id="AT2G22300.1">
    <property type="protein sequence ID" value="AT2G22300.1"/>
    <property type="gene ID" value="AT2G22300"/>
</dbReference>
<dbReference type="Gramene" id="AT2G22300.2">
    <property type="protein sequence ID" value="AT2G22300.2"/>
    <property type="gene ID" value="AT2G22300"/>
</dbReference>
<dbReference type="KEGG" id="ath:AT2G22300"/>
<dbReference type="Araport" id="AT2G22300"/>
<dbReference type="TAIR" id="AT2G22300">
    <property type="gene designation" value="SR1"/>
</dbReference>
<dbReference type="eggNOG" id="KOG0520">
    <property type="taxonomic scope" value="Eukaryota"/>
</dbReference>
<dbReference type="HOGENOM" id="CLU_005708_1_1_1"/>
<dbReference type="InParanoid" id="Q8GSA7"/>
<dbReference type="PhylomeDB" id="Q8GSA7"/>
<dbReference type="CD-CODE" id="4299E36E">
    <property type="entry name" value="Nucleolus"/>
</dbReference>
<dbReference type="PRO" id="PR:Q8GSA7"/>
<dbReference type="Proteomes" id="UP000006548">
    <property type="component" value="Chromosome 2"/>
</dbReference>
<dbReference type="ExpressionAtlas" id="Q8GSA7">
    <property type="expression patterns" value="baseline and differential"/>
</dbReference>
<dbReference type="GO" id="GO:0005634">
    <property type="term" value="C:nucleus"/>
    <property type="evidence" value="ECO:0000314"/>
    <property type="project" value="UniProtKB"/>
</dbReference>
<dbReference type="GO" id="GO:0005516">
    <property type="term" value="F:calmodulin binding"/>
    <property type="evidence" value="ECO:0000314"/>
    <property type="project" value="UniProtKB"/>
</dbReference>
<dbReference type="GO" id="GO:0003700">
    <property type="term" value="F:DNA-binding transcription factor activity"/>
    <property type="evidence" value="ECO:0000314"/>
    <property type="project" value="TAIR"/>
</dbReference>
<dbReference type="GO" id="GO:0043565">
    <property type="term" value="F:sequence-specific DNA binding"/>
    <property type="evidence" value="ECO:0000314"/>
    <property type="project" value="UniProtKB"/>
</dbReference>
<dbReference type="GO" id="GO:0070417">
    <property type="term" value="P:cellular response to cold"/>
    <property type="evidence" value="ECO:0000316"/>
    <property type="project" value="TAIR"/>
</dbReference>
<dbReference type="GO" id="GO:0042742">
    <property type="term" value="P:defense response to bacterium"/>
    <property type="evidence" value="ECO:0000315"/>
    <property type="project" value="TAIR"/>
</dbReference>
<dbReference type="GO" id="GO:0050832">
    <property type="term" value="P:defense response to fungus"/>
    <property type="evidence" value="ECO:0000316"/>
    <property type="project" value="TAIR"/>
</dbReference>
<dbReference type="GO" id="GO:0106167">
    <property type="term" value="P:extracellular ATP signaling"/>
    <property type="evidence" value="ECO:0000315"/>
    <property type="project" value="TAIR"/>
</dbReference>
<dbReference type="GO" id="GO:0010150">
    <property type="term" value="P:leaf senescence"/>
    <property type="evidence" value="ECO:0000315"/>
    <property type="project" value="TAIR"/>
</dbReference>
<dbReference type="GO" id="GO:1900367">
    <property type="term" value="P:positive regulation of defense response to insect"/>
    <property type="evidence" value="ECO:0000315"/>
    <property type="project" value="UniProtKB"/>
</dbReference>
<dbReference type="GO" id="GO:0006355">
    <property type="term" value="P:regulation of DNA-templated transcription"/>
    <property type="evidence" value="ECO:0000304"/>
    <property type="project" value="TAIR"/>
</dbReference>
<dbReference type="GO" id="GO:0009409">
    <property type="term" value="P:response to cold"/>
    <property type="evidence" value="ECO:0000315"/>
    <property type="project" value="UniProtKB"/>
</dbReference>
<dbReference type="FunFam" id="1.20.5.190:FF:000003">
    <property type="entry name" value="Calmodulin-binding transcription activator 2"/>
    <property type="match status" value="1"/>
</dbReference>
<dbReference type="FunFam" id="2.60.40.10:FF:000314">
    <property type="entry name" value="Calmodulin-binding transcription activator 2"/>
    <property type="match status" value="1"/>
</dbReference>
<dbReference type="FunFam" id="1.25.40.20:FF:000551">
    <property type="entry name" value="Calmodulin-binding transcription activator 3"/>
    <property type="match status" value="1"/>
</dbReference>
<dbReference type="Gene3D" id="1.20.5.190">
    <property type="match status" value="1"/>
</dbReference>
<dbReference type="Gene3D" id="1.25.40.20">
    <property type="entry name" value="Ankyrin repeat-containing domain"/>
    <property type="match status" value="1"/>
</dbReference>
<dbReference type="Gene3D" id="2.60.40.10">
    <property type="entry name" value="Immunoglobulins"/>
    <property type="match status" value="1"/>
</dbReference>
<dbReference type="InterPro" id="IPR002110">
    <property type="entry name" value="Ankyrin_rpt"/>
</dbReference>
<dbReference type="InterPro" id="IPR036770">
    <property type="entry name" value="Ankyrin_rpt-contain_sf"/>
</dbReference>
<dbReference type="InterPro" id="IPR005559">
    <property type="entry name" value="CG-1_dom"/>
</dbReference>
<dbReference type="InterPro" id="IPR013783">
    <property type="entry name" value="Ig-like_fold"/>
</dbReference>
<dbReference type="InterPro" id="IPR014756">
    <property type="entry name" value="Ig_E-set"/>
</dbReference>
<dbReference type="InterPro" id="IPR000048">
    <property type="entry name" value="IQ_motif_EF-hand-BS"/>
</dbReference>
<dbReference type="InterPro" id="IPR027417">
    <property type="entry name" value="P-loop_NTPase"/>
</dbReference>
<dbReference type="PANTHER" id="PTHR23335:SF30">
    <property type="entry name" value="CALMODULIN-BINDING TRANSCRIPTION ACTIVATOR 3"/>
    <property type="match status" value="1"/>
</dbReference>
<dbReference type="PANTHER" id="PTHR23335">
    <property type="entry name" value="CALMODULIN-BINDING TRANSCRIPTION ACTIVATOR CAMTA"/>
    <property type="match status" value="1"/>
</dbReference>
<dbReference type="Pfam" id="PF12796">
    <property type="entry name" value="Ank_2"/>
    <property type="match status" value="1"/>
</dbReference>
<dbReference type="Pfam" id="PF03859">
    <property type="entry name" value="CG-1"/>
    <property type="match status" value="1"/>
</dbReference>
<dbReference type="Pfam" id="PF00612">
    <property type="entry name" value="IQ"/>
    <property type="match status" value="2"/>
</dbReference>
<dbReference type="SMART" id="SM01076">
    <property type="entry name" value="CG-1"/>
    <property type="match status" value="1"/>
</dbReference>
<dbReference type="SMART" id="SM00015">
    <property type="entry name" value="IQ"/>
    <property type="match status" value="2"/>
</dbReference>
<dbReference type="SUPFAM" id="SSF48403">
    <property type="entry name" value="Ankyrin repeat"/>
    <property type="match status" value="1"/>
</dbReference>
<dbReference type="SUPFAM" id="SSF81296">
    <property type="entry name" value="E set domains"/>
    <property type="match status" value="1"/>
</dbReference>
<dbReference type="SUPFAM" id="SSF52540">
    <property type="entry name" value="P-loop containing nucleoside triphosphate hydrolases"/>
    <property type="match status" value="1"/>
</dbReference>
<dbReference type="PROSITE" id="PS50297">
    <property type="entry name" value="ANK_REP_REGION"/>
    <property type="match status" value="1"/>
</dbReference>
<dbReference type="PROSITE" id="PS50088">
    <property type="entry name" value="ANK_REPEAT"/>
    <property type="match status" value="1"/>
</dbReference>
<dbReference type="PROSITE" id="PS51437">
    <property type="entry name" value="CG_1"/>
    <property type="match status" value="1"/>
</dbReference>
<dbReference type="PROSITE" id="PS50096">
    <property type="entry name" value="IQ"/>
    <property type="match status" value="2"/>
</dbReference>
<keyword id="KW-0010">Activator</keyword>
<keyword id="KW-0040">ANK repeat</keyword>
<keyword id="KW-0106">Calcium</keyword>
<keyword id="KW-0112">Calmodulin-binding</keyword>
<keyword id="KW-0175">Coiled coil</keyword>
<keyword id="KW-0238">DNA-binding</keyword>
<keyword id="KW-0539">Nucleus</keyword>
<keyword id="KW-0597">Phosphoprotein</keyword>
<keyword id="KW-0611">Plant defense</keyword>
<keyword id="KW-1185">Reference proteome</keyword>
<keyword id="KW-0677">Repeat</keyword>
<keyword id="KW-0678">Repressor</keyword>
<keyword id="KW-0346">Stress response</keyword>
<keyword id="KW-0804">Transcription</keyword>
<keyword id="KW-0805">Transcription regulation</keyword>
<keyword id="KW-0832">Ubl conjugation</keyword>
<gene>
    <name evidence="26" type="primary">CAMTA3</name>
    <name evidence="29" type="synonym">CMTA3</name>
    <name evidence="28" type="synonym">SARD3</name>
    <name evidence="27" type="synonym">SR1</name>
    <name evidence="31" type="ordered locus">At2g22300</name>
    <name evidence="32" type="ORF">T26C19.4</name>
</gene>
<name>CMTA3_ARATH</name>
<comment type="function">
    <text evidence="8 10 11 13 14 15 16 17 18 20 21 22 23 30">Transcription activator that binds to the DNA consensus sequence 5'-[ACG]CGCG[GTC]-3'. Binds calmodulin in a calcium-dependent manner in vitro (PubMed:12218065). Regulates transcriptional activity in response to calcium signals (Probable). Involved in freezing tolerance in association with CAMTA1 and CAMTA2 (PubMed:23581962). Required for the cold-induced expression of DREB1B/CBF1, DREB1C/CBF2, ZAT12 and GOLS3 (PubMed:19270186). Involved in response to cold. Contributes together with CAMTA5 to the positive regulation of the cold-induced expression of DREB1A/CBF3, DREB1B/CBF1 and DREB1C/CBF2 (PubMed:28351986). Involved together with CAMTA2 and CAMTA4 in the positive regulation of a general stress response (GSR) (PubMed:25039701). Involved in the regulation of GSR amplitude downstream of MEKK1 (PubMed:25157030). Involved in the regulation of a set of genes involved in defense responses against pathogens (PubMed:18298954). Involved in the regulation of both basal resistance and systemic acquired resistance (SAR) (PubMed:21900483). Acts as negative regulator of plant immunity (PubMed:19122675, PubMed:21900483, PubMed:22345509, PubMed:28407487). Binds to the promoter of the defense-related gene EDS1 and represses its expression (PubMed:19122675). Binds to the promoter of the defense-related gene NDR1 and represses its expression (PubMed:22345509). Involved in defense against insects (PubMed:22371088, PubMed:23072934). Required for tolerance to the generalist herbivore Trichoplusia ni, and contributes to the positive regulation of genes associated with glucosinolate metabolism (PubMed:23072934). Required for tolerance to Bradysia impatiens larvae. Mediates herbivore-induced wound response (PubMed:22371088). Required for wound-induced jasmonate accumulation (PubMed:22371088, PubMed:23072934). Involved in the regulation of ethylene-induced senescence by binding to the promoter of the senescence-inducer gene EIN3 and repressing its expression (PubMed:22345509).</text>
</comment>
<comment type="subunit">
    <text evidence="19 23">Interacts with SR1IP1 (PubMed:24528504). Interacts with DSC1 (PubMed:28407487).</text>
</comment>
<comment type="subcellular location">
    <subcellularLocation>
        <location evidence="4 7 8 12 22">Nucleus</location>
    </subcellularLocation>
</comment>
<comment type="tissue specificity">
    <text evidence="6 8 9">Expressed in roots, stems, leaves, carpels, and siliques, but not in stigmas or other parts of the flower.</text>
</comment>
<comment type="induction">
    <text evidence="6 8 15">By heat shock, UVB, salt, wounding, ethylene and methyl jasmonate (PubMed:11162426, PubMed:12218065). Induced by infection with the fungal pathogen Golovinomyces cichoracearum (powdery mildew) and the bacterial pathogen Pseudomonas syringae pv tomato strain DC3000 (PubMed:22345509).</text>
</comment>
<comment type="PTM">
    <text evidence="19">Ubiquinated during pathogen infection. Ubiquitination leads to its subsequent proteasome-dependent degradation, thus allowing the establishment of plant defense response.</text>
</comment>
<comment type="disruption phenotype">
    <text evidence="10 11 13 16 17 18 23">No visible phenotype under normal growth conditions, but the double mutants camta1 and camta3 are impaired in freezing tolerance (PubMed:19270186). No visible phenotype under normal growth conditions, but the double mutants camt1 and camt3 exhibit semi-dwarf phenotypes (PubMed:19270186, PubMed:23581962). No visible phenotype under normal growth conditions, but the double mutants camt2 and camt3 exhibit dwarf phenotypes (PubMed:23581962). Reduced growth, chlorosis, spontaneous lesions and constitutive expression of defense-related genes when grown under 22 degrees Celsius (PubMed:18298954, PubMed:19122675, PubMed:28407487). Enhanced sensitivity to insect herbivores (PubMed:22371088, PubMed:23072934).</text>
</comment>
<comment type="miscellaneous">
    <text evidence="14">The camta3-3D activation tagging mutant plants exhibit compromised systemic acquired resistance (SAR) and enhanced susceptibility to virulent pathogens.</text>
</comment>
<comment type="similarity">
    <text evidence="29">Belongs to the CAMTA family.</text>
</comment>
<comment type="sequence caution" evidence="29">
    <conflict type="erroneous gene model prediction">
        <sequence resource="EMBL-CDS" id="AAD23613"/>
    </conflict>
</comment>
<feature type="chain" id="PRO_0000114488" description="Calmodulin-binding transcription activator 3">
    <location>
        <begin position="1"/>
        <end position="1032"/>
    </location>
</feature>
<feature type="repeat" description="ANK 1">
    <location>
        <begin position="661"/>
        <end position="690"/>
    </location>
</feature>
<feature type="repeat" description="ANK 2">
    <location>
        <begin position="694"/>
        <end position="723"/>
    </location>
</feature>
<feature type="repeat" description="ANK 3">
    <location>
        <begin position="733"/>
        <end position="762"/>
    </location>
</feature>
<feature type="domain" description="IQ 1" evidence="3">
    <location>
        <begin position="852"/>
        <end position="881"/>
    </location>
</feature>
<feature type="domain" description="IQ 2" evidence="3">
    <location>
        <begin position="875"/>
        <end position="904"/>
    </location>
</feature>
<feature type="DNA-binding region" description="CG-1" evidence="4">
    <location>
        <begin position="15"/>
        <end position="141"/>
    </location>
</feature>
<feature type="region of interest" description="Disordered" evidence="5">
    <location>
        <begin position="146"/>
        <end position="197"/>
    </location>
</feature>
<feature type="region of interest" description="Calmodulin-binding" evidence="8">
    <location>
        <begin position="900"/>
        <end position="922"/>
    </location>
</feature>
<feature type="coiled-coil region" evidence="2">
    <location>
        <begin position="945"/>
        <end position="987"/>
    </location>
</feature>
<feature type="compositionally biased region" description="Polar residues" evidence="5">
    <location>
        <begin position="174"/>
        <end position="195"/>
    </location>
</feature>
<feature type="modified residue" description="Phosphoserine" evidence="33">
    <location>
        <position position="272"/>
    </location>
</feature>
<feature type="modified residue" description="Phosphoserine" evidence="1">
    <location>
        <position position="964"/>
    </location>
</feature>
<feature type="mutagenesis site" description="Gain-of-function mutant." evidence="15">
    <original>A</original>
    <variation>V</variation>
    <location>
        <position position="855"/>
    </location>
</feature>
<feature type="sequence conflict" description="In Ref. 6; BAE98628." evidence="29" ref="6">
    <original>Q</original>
    <variation>E</variation>
    <location>
        <position position="382"/>
    </location>
</feature>
<evidence type="ECO:0000250" key="1">
    <source>
        <dbReference type="UniProtKB" id="Q6NPP4"/>
    </source>
</evidence>
<evidence type="ECO:0000255" key="2"/>
<evidence type="ECO:0000255" key="3">
    <source>
        <dbReference type="PROSITE-ProRule" id="PRU00116"/>
    </source>
</evidence>
<evidence type="ECO:0000255" key="4">
    <source>
        <dbReference type="PROSITE-ProRule" id="PRU00767"/>
    </source>
</evidence>
<evidence type="ECO:0000256" key="5">
    <source>
        <dbReference type="SAM" id="MobiDB-lite"/>
    </source>
</evidence>
<evidence type="ECO:0000269" key="6">
    <source>
    </source>
</evidence>
<evidence type="ECO:0000269" key="7">
    <source>
    </source>
</evidence>
<evidence type="ECO:0000269" key="8">
    <source>
    </source>
</evidence>
<evidence type="ECO:0000269" key="9">
    <source>
    </source>
</evidence>
<evidence type="ECO:0000269" key="10">
    <source>
    </source>
</evidence>
<evidence type="ECO:0000269" key="11">
    <source>
    </source>
</evidence>
<evidence type="ECO:0000269" key="12">
    <source>
    </source>
</evidence>
<evidence type="ECO:0000269" key="13">
    <source>
    </source>
</evidence>
<evidence type="ECO:0000269" key="14">
    <source>
    </source>
</evidence>
<evidence type="ECO:0000269" key="15">
    <source>
    </source>
</evidence>
<evidence type="ECO:0000269" key="16">
    <source>
    </source>
</evidence>
<evidence type="ECO:0000269" key="17">
    <source>
    </source>
</evidence>
<evidence type="ECO:0000269" key="18">
    <source>
    </source>
</evidence>
<evidence type="ECO:0000269" key="19">
    <source>
    </source>
</evidence>
<evidence type="ECO:0000269" key="20">
    <source>
    </source>
</evidence>
<evidence type="ECO:0000269" key="21">
    <source>
    </source>
</evidence>
<evidence type="ECO:0000269" key="22">
    <source>
    </source>
</evidence>
<evidence type="ECO:0000269" key="23">
    <source>
    </source>
</evidence>
<evidence type="ECO:0000303" key="24">
    <source>
    </source>
</evidence>
<evidence type="ECO:0000303" key="25">
    <source>
    </source>
</evidence>
<evidence type="ECO:0000303" key="26">
    <source>
    </source>
</evidence>
<evidence type="ECO:0000303" key="27">
    <source>
    </source>
</evidence>
<evidence type="ECO:0000303" key="28">
    <source>
    </source>
</evidence>
<evidence type="ECO:0000305" key="29"/>
<evidence type="ECO:0000305" key="30">
    <source>
    </source>
</evidence>
<evidence type="ECO:0000312" key="31">
    <source>
        <dbReference type="Araport" id="AT2G22300"/>
    </source>
</evidence>
<evidence type="ECO:0000312" key="32">
    <source>
        <dbReference type="EMBL" id="AAD23613.1"/>
    </source>
</evidence>
<evidence type="ECO:0007744" key="33">
    <source>
    </source>
</evidence>
<accession>Q8GSA7</accession>
<accession>Q0WW70</accession>
<accession>Q9FPR9</accession>
<accession>Q9SID7</accession>
<protein>
    <recommendedName>
        <fullName evidence="26">Calmodulin-binding transcription activator 3</fullName>
        <shortName evidence="26">AtCAMTA3</shortName>
    </recommendedName>
    <alternativeName>
        <fullName evidence="24">Ethylene-induced calmodulin-binding protein 1</fullName>
        <shortName evidence="24">EICBP1</shortName>
    </alternativeName>
    <alternativeName>
        <fullName evidence="25">Ethylene-induced calmodulin-binding protein a</fullName>
        <shortName evidence="25">EICBP.a</shortName>
    </alternativeName>
    <alternativeName>
        <fullName evidence="28">Protein SAR-DEFICIENT 3</fullName>
    </alternativeName>
    <alternativeName>
        <fullName evidence="27">Signal-responsive protein 1</fullName>
        <shortName evidence="27">AtSR1</shortName>
    </alternativeName>
</protein>
<sequence>MAEARRFSPVHELDVGQILSEARHRWLRPPEICEILQNYQRFQISTEPPTTPSSGSVFMFDRKVLRYFRKDGHNWRKKKDGKTVKEAHERLKAGSVDVLHCYYAHGQDNENFQRRSYWLLQEELSHIVFVHYLEVKGSRVSTSFNRMQRTEDAARSPQETGDALTSEHDGYASCSFNQNDHSNHSQTTDSASVNGFHSPELEDAESAYNQHGSSTAYSHQELQQPATGGNLTGFDPYYQISLTPRDSYQKELRTIPVTDSSIMVDKSKTINSPGVTNGLKNRKSIDSQTWEEILGNCGSGVEALPLQPNSEHEVLDQILESSFTMQDFASLQESMVKSQNQELNSGLTSDRTVWFQGQDMELNAISNLASNEKAPYLSTMKQHLLHGALGEEGLKKMDSFNRWMSKELGDVGVIADANESFTQSSSRTYWEEVESEDGSNGHNSRRDMDGYVMSPSLSKEQLFSINDFSPSWAYVGCEVVVFVTGKFLKTREETEIGEWSCMFGQTEVPADVISNGILQCVAPMHEAGRVPFYVTCSNRLACSEVREFEYKVAESQVFDREADDESTIDILEARFVKLLCSKSENTSPVSGNDSDLSQLSEKISLLLFENDDQLDQMLMNEISQENMKNNLLQEFLKESLHSWLLQKIAEGGKGPSVLDEGGQGVLHFAASLGYNWALEPTIIAGVSVDFRDVNGWTALHWAAFFGRERIIGSLIALGAAPGTLTDPNPDFPSGSTPSDLAYANGHKGIAGYLSEYALRAHVSLLSLNDKNAETVEMAPSPSSSSLTDSLTAVRNATQAAARIHQVFRAQSFQKKQLKEFGDKKLGMSEERALSMLAPKTHKSGRAHSDDSVQAAAIRIQNKFRGYKGRKDYLITRQRIIKIQAHVRGYQFRKNYRKIIWSVGVLEKVILRWRRKGAGLRGFKSEALVEKMQDGTEKEEDDDFFKQGRKQTEDRLQKALARVKSMVQYPEARDQYRRLLNVVNDIQESKVEKALENSEATCFDDDDDLIDIEALLEDDDTLMLPMSSSLWTS</sequence>
<organism>
    <name type="scientific">Arabidopsis thaliana</name>
    <name type="common">Mouse-ear cress</name>
    <dbReference type="NCBI Taxonomy" id="3702"/>
    <lineage>
        <taxon>Eukaryota</taxon>
        <taxon>Viridiplantae</taxon>
        <taxon>Streptophyta</taxon>
        <taxon>Embryophyta</taxon>
        <taxon>Tracheophyta</taxon>
        <taxon>Spermatophyta</taxon>
        <taxon>Magnoliopsida</taxon>
        <taxon>eudicotyledons</taxon>
        <taxon>Gunneridae</taxon>
        <taxon>Pentapetalae</taxon>
        <taxon>rosids</taxon>
        <taxon>malvids</taxon>
        <taxon>Brassicales</taxon>
        <taxon>Brassicaceae</taxon>
        <taxon>Camelineae</taxon>
        <taxon>Arabidopsis</taxon>
    </lineage>
</organism>
<proteinExistence type="evidence at protein level"/>